<name>LOLA_ECOL6</name>
<dbReference type="EMBL" id="AE014075">
    <property type="protein sequence ID" value="AAN79500.1"/>
    <property type="status" value="ALT_INIT"/>
    <property type="molecule type" value="Genomic_DNA"/>
</dbReference>
<dbReference type="RefSeq" id="WP_001295343.1">
    <property type="nucleotide sequence ID" value="NZ_CP051263.1"/>
</dbReference>
<dbReference type="SMR" id="P61317"/>
<dbReference type="STRING" id="199310.c1028"/>
<dbReference type="GeneID" id="93776529"/>
<dbReference type="KEGG" id="ecc:c1028"/>
<dbReference type="eggNOG" id="COG2834">
    <property type="taxonomic scope" value="Bacteria"/>
</dbReference>
<dbReference type="HOGENOM" id="CLU_087560_1_1_6"/>
<dbReference type="Proteomes" id="UP000001410">
    <property type="component" value="Chromosome"/>
</dbReference>
<dbReference type="GO" id="GO:0030288">
    <property type="term" value="C:outer membrane-bounded periplasmic space"/>
    <property type="evidence" value="ECO:0007669"/>
    <property type="project" value="TreeGrafter"/>
</dbReference>
<dbReference type="GO" id="GO:0044874">
    <property type="term" value="P:lipoprotein localization to outer membrane"/>
    <property type="evidence" value="ECO:0007669"/>
    <property type="project" value="UniProtKB-UniRule"/>
</dbReference>
<dbReference type="GO" id="GO:0042953">
    <property type="term" value="P:lipoprotein transport"/>
    <property type="evidence" value="ECO:0007669"/>
    <property type="project" value="InterPro"/>
</dbReference>
<dbReference type="CDD" id="cd16325">
    <property type="entry name" value="LolA"/>
    <property type="match status" value="1"/>
</dbReference>
<dbReference type="FunFam" id="2.50.20.10:FF:000001">
    <property type="entry name" value="Outer-membrane lipoprotein carrier protein"/>
    <property type="match status" value="1"/>
</dbReference>
<dbReference type="Gene3D" id="2.50.20.10">
    <property type="entry name" value="Lipoprotein localisation LolA/LolB/LppX"/>
    <property type="match status" value="1"/>
</dbReference>
<dbReference type="HAMAP" id="MF_00240">
    <property type="entry name" value="LolA"/>
    <property type="match status" value="1"/>
</dbReference>
<dbReference type="InterPro" id="IPR029046">
    <property type="entry name" value="LolA/LolB/LppX"/>
</dbReference>
<dbReference type="InterPro" id="IPR004564">
    <property type="entry name" value="OM_lipoprot_carrier_LolA-like"/>
</dbReference>
<dbReference type="InterPro" id="IPR018323">
    <property type="entry name" value="OM_lipoprot_carrier_LolA_Pbac"/>
</dbReference>
<dbReference type="NCBIfam" id="TIGR00547">
    <property type="entry name" value="lolA"/>
    <property type="match status" value="1"/>
</dbReference>
<dbReference type="PANTHER" id="PTHR35869">
    <property type="entry name" value="OUTER-MEMBRANE LIPOPROTEIN CARRIER PROTEIN"/>
    <property type="match status" value="1"/>
</dbReference>
<dbReference type="PANTHER" id="PTHR35869:SF1">
    <property type="entry name" value="OUTER-MEMBRANE LIPOPROTEIN CARRIER PROTEIN"/>
    <property type="match status" value="1"/>
</dbReference>
<dbReference type="Pfam" id="PF03548">
    <property type="entry name" value="LolA"/>
    <property type="match status" value="1"/>
</dbReference>
<dbReference type="SUPFAM" id="SSF89392">
    <property type="entry name" value="Prokaryotic lipoproteins and lipoprotein localization factors"/>
    <property type="match status" value="1"/>
</dbReference>
<protein>
    <recommendedName>
        <fullName>Outer-membrane lipoprotein carrier protein</fullName>
    </recommendedName>
    <alternativeName>
        <fullName>P20</fullName>
    </alternativeName>
</protein>
<sequence>MKKIAITCALLSSLVASSVWADAASDLKSRLDKVSSFHASFTQKVTDGSGAAVQEGQGDLWVKRPNLFNWHMTQPDESILVSDGKTLWFYNPFVEQATATWLKDATGNTPFMLIARNQSSDWQQYNIKQNGDDFVLTPKASNGNLKQFTINVGRDGTIHQFSAVEQDDQRSSYQLKSQQNGAVDAAKFTFTPPQGVTVDDQRK</sequence>
<reference key="1">
    <citation type="journal article" date="2002" name="Proc. Natl. Acad. Sci. U.S.A.">
        <title>Extensive mosaic structure revealed by the complete genome sequence of uropathogenic Escherichia coli.</title>
        <authorList>
            <person name="Welch R.A."/>
            <person name="Burland V."/>
            <person name="Plunkett G. III"/>
            <person name="Redford P."/>
            <person name="Roesch P."/>
            <person name="Rasko D."/>
            <person name="Buckles E.L."/>
            <person name="Liou S.-R."/>
            <person name="Boutin A."/>
            <person name="Hackett J."/>
            <person name="Stroud D."/>
            <person name="Mayhew G.F."/>
            <person name="Rose D.J."/>
            <person name="Zhou S."/>
            <person name="Schwartz D.C."/>
            <person name="Perna N.T."/>
            <person name="Mobley H.L.T."/>
            <person name="Donnenberg M.S."/>
            <person name="Blattner F.R."/>
        </authorList>
    </citation>
    <scope>NUCLEOTIDE SEQUENCE [LARGE SCALE GENOMIC DNA]</scope>
    <source>
        <strain>CFT073 / ATCC 700928 / UPEC</strain>
    </source>
</reference>
<evidence type="ECO:0000250" key="1"/>
<evidence type="ECO:0000305" key="2"/>
<proteinExistence type="inferred from homology"/>
<keyword id="KW-0143">Chaperone</keyword>
<keyword id="KW-0574">Periplasm</keyword>
<keyword id="KW-0653">Protein transport</keyword>
<keyword id="KW-1185">Reference proteome</keyword>
<keyword id="KW-0732">Signal</keyword>
<keyword id="KW-0813">Transport</keyword>
<accession>P61317</accession>
<accession>P39178</accession>
<accession>Q8X5H8</accession>
<comment type="function">
    <text evidence="1">Participates in the translocation of lipoproteins from the inner membrane to the outer membrane. Only forms a complex with a lipoprotein if the residue after the N-terminal Cys is not an aspartate (The Asp acts as a targeting signal to indicate that the lipoprotein should stay in the inner membrane) (By similarity).</text>
</comment>
<comment type="subunit">
    <text evidence="1">Monomer.</text>
</comment>
<comment type="subcellular location">
    <subcellularLocation>
        <location evidence="1">Periplasm</location>
    </subcellularLocation>
</comment>
<comment type="similarity">
    <text evidence="2">Belongs to the LolA family.</text>
</comment>
<comment type="sequence caution" evidence="2">
    <conflict type="erroneous initiation">
        <sequence resource="EMBL-CDS" id="AAN79500"/>
    </conflict>
</comment>
<gene>
    <name type="primary">lolA</name>
    <name type="synonym">lplA</name>
    <name type="ordered locus">c1028</name>
</gene>
<organism>
    <name type="scientific">Escherichia coli O6:H1 (strain CFT073 / ATCC 700928 / UPEC)</name>
    <dbReference type="NCBI Taxonomy" id="199310"/>
    <lineage>
        <taxon>Bacteria</taxon>
        <taxon>Pseudomonadati</taxon>
        <taxon>Pseudomonadota</taxon>
        <taxon>Gammaproteobacteria</taxon>
        <taxon>Enterobacterales</taxon>
        <taxon>Enterobacteriaceae</taxon>
        <taxon>Escherichia</taxon>
    </lineage>
</organism>
<feature type="signal peptide">
    <location>
        <begin position="1"/>
        <end position="21"/>
    </location>
</feature>
<feature type="chain" id="PRO_0000018257" description="Outer-membrane lipoprotein carrier protein">
    <location>
        <begin position="22"/>
        <end position="203"/>
    </location>
</feature>